<comment type="catalytic activity">
    <reaction evidence="1">
        <text>(6S)-5,6,7,8-tetrahydrofolate + formate + ATP = (6R)-10-formyltetrahydrofolate + ADP + phosphate</text>
        <dbReference type="Rhea" id="RHEA:20221"/>
        <dbReference type="ChEBI" id="CHEBI:15740"/>
        <dbReference type="ChEBI" id="CHEBI:30616"/>
        <dbReference type="ChEBI" id="CHEBI:43474"/>
        <dbReference type="ChEBI" id="CHEBI:57453"/>
        <dbReference type="ChEBI" id="CHEBI:195366"/>
        <dbReference type="ChEBI" id="CHEBI:456216"/>
        <dbReference type="EC" id="6.3.4.3"/>
    </reaction>
</comment>
<comment type="pathway">
    <text evidence="1">One-carbon metabolism; tetrahydrofolate interconversion.</text>
</comment>
<comment type="similarity">
    <text evidence="1">Belongs to the formate--tetrahydrofolate ligase family.</text>
</comment>
<organism>
    <name type="scientific">Streptococcus pneumoniae (strain P1031)</name>
    <dbReference type="NCBI Taxonomy" id="488223"/>
    <lineage>
        <taxon>Bacteria</taxon>
        <taxon>Bacillati</taxon>
        <taxon>Bacillota</taxon>
        <taxon>Bacilli</taxon>
        <taxon>Lactobacillales</taxon>
        <taxon>Streptococcaceae</taxon>
        <taxon>Streptococcus</taxon>
    </lineage>
</organism>
<name>FTHS_STRZP</name>
<accession>C1CKW9</accession>
<protein>
    <recommendedName>
        <fullName evidence="1">Formate--tetrahydrofolate ligase</fullName>
        <ecNumber evidence="1">6.3.4.3</ecNumber>
    </recommendedName>
    <alternativeName>
        <fullName evidence="1">Formyltetrahydrofolate synthetase</fullName>
        <shortName evidence="1">FHS</shortName>
        <shortName evidence="1">FTHFS</shortName>
    </alternativeName>
</protein>
<dbReference type="EC" id="6.3.4.3" evidence="1"/>
<dbReference type="EMBL" id="CP000920">
    <property type="protein sequence ID" value="ACO20531.1"/>
    <property type="molecule type" value="Genomic_DNA"/>
</dbReference>
<dbReference type="RefSeq" id="WP_000845290.1">
    <property type="nucleotide sequence ID" value="NC_012467.1"/>
</dbReference>
<dbReference type="SMR" id="C1CKW9"/>
<dbReference type="KEGG" id="spp:SPP_1267"/>
<dbReference type="HOGENOM" id="CLU_003601_3_3_9"/>
<dbReference type="UniPathway" id="UPA00193"/>
<dbReference type="GO" id="GO:0005524">
    <property type="term" value="F:ATP binding"/>
    <property type="evidence" value="ECO:0007669"/>
    <property type="project" value="UniProtKB-UniRule"/>
</dbReference>
<dbReference type="GO" id="GO:0004329">
    <property type="term" value="F:formate-tetrahydrofolate ligase activity"/>
    <property type="evidence" value="ECO:0007669"/>
    <property type="project" value="UniProtKB-UniRule"/>
</dbReference>
<dbReference type="GO" id="GO:0035999">
    <property type="term" value="P:tetrahydrofolate interconversion"/>
    <property type="evidence" value="ECO:0007669"/>
    <property type="project" value="UniProtKB-UniRule"/>
</dbReference>
<dbReference type="CDD" id="cd00477">
    <property type="entry name" value="FTHFS"/>
    <property type="match status" value="1"/>
</dbReference>
<dbReference type="FunFam" id="3.30.1510.10:FF:000001">
    <property type="entry name" value="Formate--tetrahydrofolate ligase"/>
    <property type="match status" value="1"/>
</dbReference>
<dbReference type="FunFam" id="3.10.410.10:FF:000001">
    <property type="entry name" value="Putative formate--tetrahydrofolate ligase"/>
    <property type="match status" value="1"/>
</dbReference>
<dbReference type="Gene3D" id="3.30.1510.10">
    <property type="entry name" value="Domain 2, N(10)-formyltetrahydrofolate synthetase"/>
    <property type="match status" value="1"/>
</dbReference>
<dbReference type="Gene3D" id="3.10.410.10">
    <property type="entry name" value="Formyltetrahydrofolate synthetase, domain 3"/>
    <property type="match status" value="1"/>
</dbReference>
<dbReference type="Gene3D" id="3.40.50.300">
    <property type="entry name" value="P-loop containing nucleotide triphosphate hydrolases"/>
    <property type="match status" value="1"/>
</dbReference>
<dbReference type="HAMAP" id="MF_01543">
    <property type="entry name" value="FTHFS"/>
    <property type="match status" value="1"/>
</dbReference>
<dbReference type="InterPro" id="IPR000559">
    <property type="entry name" value="Formate_THF_ligase"/>
</dbReference>
<dbReference type="InterPro" id="IPR020628">
    <property type="entry name" value="Formate_THF_ligase_CS"/>
</dbReference>
<dbReference type="InterPro" id="IPR027417">
    <property type="entry name" value="P-loop_NTPase"/>
</dbReference>
<dbReference type="NCBIfam" id="NF010030">
    <property type="entry name" value="PRK13505.1"/>
    <property type="match status" value="1"/>
</dbReference>
<dbReference type="Pfam" id="PF01268">
    <property type="entry name" value="FTHFS"/>
    <property type="match status" value="1"/>
</dbReference>
<dbReference type="SUPFAM" id="SSF52540">
    <property type="entry name" value="P-loop containing nucleoside triphosphate hydrolases"/>
    <property type="match status" value="1"/>
</dbReference>
<dbReference type="PROSITE" id="PS00721">
    <property type="entry name" value="FTHFS_1"/>
    <property type="match status" value="1"/>
</dbReference>
<dbReference type="PROSITE" id="PS00722">
    <property type="entry name" value="FTHFS_2"/>
    <property type="match status" value="1"/>
</dbReference>
<sequence>MKTDIEIAQSIELKPIVDVVEKLGISYDDLELYGKYKAKLSFDKIRAVESNPVGKLILVTAINPTPAGEGKSTLTIGLADALNKIGKKTMIAIREPSLGPVMGIKGGAAGGGYAQVLPMEDINLHFTGDMHAITTANNALSALIDNHLHQGNELGIDQRRILWKRVVDLNDRALRHVTVGLGGPLNGIPREDGFDITVASEIMAILCLATDIEDLKRRLANIVIGYRYDRTPVSVGDLQVEGALALILKDAIKPNLVQTIYGTPAFVHGGPFANIAHGCNSVLATTTALHLADYTVTEAGFGADLGAEKFLDIKTPNLPTSPDAVVIVATLRALKMNGGVAKDALTEENVEAVRAGFANLKRHVENIRKFGIPAVVAINEFVSDTEAEIAVLKELCASIDVPVELASVWADGAEGGVALAETVVKTIAENPANYKRLYDNDLSVQEKIEKIVTEIYRGSKVNFEKKAQTQIAQIVQNGWDKLPICMAKTQYSFSDNPNALGAPENFEITIRELVPKLGAGFIVALTGDVMTMPGLPKRPAALNMDVESDGTVLGLF</sequence>
<keyword id="KW-0067">ATP-binding</keyword>
<keyword id="KW-0436">Ligase</keyword>
<keyword id="KW-0547">Nucleotide-binding</keyword>
<keyword id="KW-0554">One-carbon metabolism</keyword>
<proteinExistence type="inferred from homology"/>
<reference key="1">
    <citation type="journal article" date="2010" name="Genome Biol.">
        <title>Structure and dynamics of the pan-genome of Streptococcus pneumoniae and closely related species.</title>
        <authorList>
            <person name="Donati C."/>
            <person name="Hiller N.L."/>
            <person name="Tettelin H."/>
            <person name="Muzzi A."/>
            <person name="Croucher N.J."/>
            <person name="Angiuoli S.V."/>
            <person name="Oggioni M."/>
            <person name="Dunning Hotopp J.C."/>
            <person name="Hu F.Z."/>
            <person name="Riley D.R."/>
            <person name="Covacci A."/>
            <person name="Mitchell T.J."/>
            <person name="Bentley S.D."/>
            <person name="Kilian M."/>
            <person name="Ehrlich G.D."/>
            <person name="Rappuoli R."/>
            <person name="Moxon E.R."/>
            <person name="Masignani V."/>
        </authorList>
    </citation>
    <scope>NUCLEOTIDE SEQUENCE [LARGE SCALE GENOMIC DNA]</scope>
    <source>
        <strain>P1031</strain>
    </source>
</reference>
<evidence type="ECO:0000255" key="1">
    <source>
        <dbReference type="HAMAP-Rule" id="MF_01543"/>
    </source>
</evidence>
<gene>
    <name evidence="1" type="primary">fhs</name>
    <name type="ordered locus">SPP_1267</name>
</gene>
<feature type="chain" id="PRO_1000185269" description="Formate--tetrahydrofolate ligase">
    <location>
        <begin position="1"/>
        <end position="556"/>
    </location>
</feature>
<feature type="binding site" evidence="1">
    <location>
        <begin position="65"/>
        <end position="72"/>
    </location>
    <ligand>
        <name>ATP</name>
        <dbReference type="ChEBI" id="CHEBI:30616"/>
    </ligand>
</feature>